<keyword id="KW-1015">Disulfide bond</keyword>
<keyword id="KW-0325">Glycoprotein</keyword>
<keyword id="KW-1039">Host endosome</keyword>
<keyword id="KW-1040">Host Golgi apparatus</keyword>
<keyword id="KW-1043">Host membrane</keyword>
<keyword id="KW-1048">Host nucleus</keyword>
<keyword id="KW-0472">Membrane</keyword>
<keyword id="KW-0812">Transmembrane</keyword>
<keyword id="KW-1133">Transmembrane helix</keyword>
<keyword id="KW-0261">Viral envelope protein</keyword>
<keyword id="KW-0946">Virion</keyword>
<protein>
    <recommendedName>
        <fullName evidence="1">Envelope glycoprotein M</fullName>
        <shortName evidence="1">gM</shortName>
    </recommendedName>
</protein>
<accession>Q77NP2</accession>
<organism>
    <name type="scientific">Varicella-zoster virus (strain Oka vaccine)</name>
    <name type="common">HHV-3</name>
    <name type="synonym">Human herpesvirus 3</name>
    <dbReference type="NCBI Taxonomy" id="341980"/>
    <lineage>
        <taxon>Viruses</taxon>
        <taxon>Duplodnaviria</taxon>
        <taxon>Heunggongvirae</taxon>
        <taxon>Peploviricota</taxon>
        <taxon>Herviviricetes</taxon>
        <taxon>Herpesvirales</taxon>
        <taxon>Orthoherpesviridae</taxon>
        <taxon>Alphaherpesvirinae</taxon>
        <taxon>Varicellovirus</taxon>
        <taxon>Varicellovirus humanalpha3</taxon>
        <taxon>Human herpesvirus 3</taxon>
    </lineage>
</organism>
<feature type="chain" id="PRO_0000385482" description="Envelope glycoprotein M">
    <location>
        <begin position="1"/>
        <end position="435"/>
    </location>
</feature>
<feature type="topological domain" description="Intravirion" evidence="1">
    <location>
        <begin position="1"/>
        <end position="36"/>
    </location>
</feature>
<feature type="transmembrane region" description="Helical" evidence="1">
    <location>
        <begin position="37"/>
        <end position="57"/>
    </location>
</feature>
<feature type="topological domain" description="Virion surface" evidence="1">
    <location>
        <begin position="58"/>
        <end position="111"/>
    </location>
</feature>
<feature type="transmembrane region" description="Helical" evidence="1">
    <location>
        <begin position="112"/>
        <end position="132"/>
    </location>
</feature>
<feature type="topological domain" description="Intravirion" evidence="1">
    <location>
        <begin position="133"/>
        <end position="155"/>
    </location>
</feature>
<feature type="transmembrane region" description="Helical" evidence="1">
    <location>
        <begin position="156"/>
        <end position="176"/>
    </location>
</feature>
<feature type="topological domain" description="Virion surface" evidence="1">
    <location>
        <begin position="177"/>
        <end position="178"/>
    </location>
</feature>
<feature type="transmembrane region" description="Helical" evidence="1">
    <location>
        <begin position="179"/>
        <end position="199"/>
    </location>
</feature>
<feature type="topological domain" description="Intravirion" evidence="1">
    <location>
        <begin position="200"/>
        <end position="233"/>
    </location>
</feature>
<feature type="transmembrane region" description="Helical" evidence="1">
    <location>
        <begin position="234"/>
        <end position="254"/>
    </location>
</feature>
<feature type="topological domain" description="Virion surface" evidence="1">
    <location>
        <begin position="255"/>
        <end position="265"/>
    </location>
</feature>
<feature type="transmembrane region" description="Helical" evidence="1">
    <location>
        <begin position="266"/>
        <end position="288"/>
    </location>
</feature>
<feature type="topological domain" description="Intravirion" evidence="1">
    <location>
        <begin position="289"/>
        <end position="294"/>
    </location>
</feature>
<feature type="transmembrane region" description="Helical" evidence="1">
    <location>
        <begin position="295"/>
        <end position="317"/>
    </location>
</feature>
<feature type="topological domain" description="Virion surface" evidence="1">
    <location>
        <begin position="318"/>
        <end position="334"/>
    </location>
</feature>
<feature type="transmembrane region" description="Helical" evidence="1">
    <location>
        <begin position="335"/>
        <end position="355"/>
    </location>
</feature>
<feature type="topological domain" description="Intravirion" evidence="1">
    <location>
        <begin position="356"/>
        <end position="435"/>
    </location>
</feature>
<feature type="disulfide bond" description="Interchain (with gN)" evidence="1">
    <location>
        <position position="68"/>
    </location>
</feature>
<organismHost>
    <name type="scientific">Homo sapiens</name>
    <name type="common">Human</name>
    <dbReference type="NCBI Taxonomy" id="9606"/>
</organismHost>
<gene>
    <name evidence="1" type="primary">gM</name>
    <name type="ORF">ORF50</name>
</gene>
<comment type="function">
    <text evidence="1 2">Envelope glycoprotein important for virion assembly and egress. Plays a role in the correct incorporation of gH-gL into virion membrane. Directs the glycoprotein N (gN) to the host trans-Golgi network.</text>
</comment>
<comment type="subunit">
    <text evidence="1">Interacts (via N-terminus) with gN (via N-terminus). The gM-gN heterodimer forms the gCII complex.</text>
</comment>
<comment type="subcellular location">
    <subcellularLocation>
        <location evidence="1">Virion membrane</location>
        <topology evidence="1">Multi-pass membrane protein</topology>
    </subcellularLocation>
    <subcellularLocation>
        <location evidence="1">Host Golgi apparatus</location>
        <location evidence="1">Host trans-Golgi network</location>
    </subcellularLocation>
    <subcellularLocation>
        <location evidence="1">Host endosome membrane</location>
        <topology evidence="1">Multi-pass membrane protein</topology>
    </subcellularLocation>
    <subcellularLocation>
        <location evidence="1">Host nucleus inner membrane</location>
        <topology evidence="1">Multi-pass membrane protein</topology>
    </subcellularLocation>
    <text evidence="1">During virion morphogenesis, this protein accumulates in the trans-Golgi network where secondary envelopment occurs.</text>
</comment>
<comment type="PTM">
    <text evidence="2">N-glycosylated.</text>
</comment>
<comment type="similarity">
    <text evidence="1">Belongs to the herpesviridae glycoprotein M family.</text>
</comment>
<name>GM_VZVO</name>
<proteinExistence type="evidence at protein level"/>
<reference key="1">
    <citation type="journal article" date="2000" name="J. Infect. Dis.">
        <title>Nucleotide sequences that distinguish Oka vaccine from parental Oka and other varicella-zoster virus isolates.</title>
        <authorList>
            <person name="Argaw T."/>
            <person name="Cohen J.I."/>
            <person name="Klutch M."/>
            <person name="Lekstrom K."/>
            <person name="Yoshikawa T."/>
            <person name="Asano Y."/>
            <person name="Krause P.R."/>
        </authorList>
    </citation>
    <scope>NUCLEOTIDE SEQUENCE [GENOMIC DNA]</scope>
    <source>
        <strain>Oka varicella vaccine Biken (V-Oka-Biken)</strain>
    </source>
</reference>
<reference key="2">
    <citation type="journal article" date="2002" name="J. Virol.">
        <title>Comparison of the complete DNA sequences of the Oka varicella vaccine and its parental virus.</title>
        <authorList>
            <person name="Gomi Y."/>
            <person name="Sunamachi H."/>
            <person name="Mori Y."/>
            <person name="Nagaike K."/>
            <person name="Takahashi M."/>
            <person name="Yamanishi K."/>
        </authorList>
    </citation>
    <scope>NUCLEOTIDE SEQUENCE [LARGE SCALE GENOMIC DNA]</scope>
    <source>
        <strain>Isolate Human/Japan/P-Oka/1970</strain>
        <strain>Oka varicella vaccine Biken (V-Oka-Biken)</strain>
    </source>
</reference>
<reference key="3">
    <citation type="journal article" date="2008" name="J. Virol.">
        <title>Complete DNA sequences of two oka strain varicella-zoster virus genomes.</title>
        <authorList>
            <person name="Tillieux S.L."/>
            <person name="Halsey W.S."/>
            <person name="Thomas E.S."/>
            <person name="Voycik J.J."/>
            <person name="Sathe G.M."/>
            <person name="Vassilev V."/>
        </authorList>
    </citation>
    <scope>NUCLEOTIDE SEQUENCE [LARGE SCALE GENOMIC DNA]</scope>
    <source>
        <strain>Oka varicella vaccine VarilRix (V-Oka-GSK)</strain>
        <strain>Oka varicella vaccine Varivax (V-Oka-Merck)</strain>
    </source>
</reference>
<reference key="4">
    <citation type="journal article" date="2008" name="J. Virol.">
        <title>Varicella-zoster virus glycoprotein M homolog is glycosylated, is expressed on the viral envelope, and functions in virus cell-to-cell and/or virus entry spread.</title>
        <authorList>
            <person name="Yamagishi Y."/>
            <person name="Sadaoka T."/>
            <person name="Yoshii H."/>
            <person name="Somboonthum P."/>
            <person name="Imazawa T."/>
            <person name="Nagaike K."/>
            <person name="Ozono K."/>
            <person name="Yamanishi K."/>
            <person name="Mori Y."/>
        </authorList>
    </citation>
    <scope>FUNCTION</scope>
    <scope>GLYCOSYLATION</scope>
    <scope>SUBCELLULAR LOCATION</scope>
    <source>
        <strain>Isolate Human/Japan/P-Oka/1970</strain>
    </source>
</reference>
<reference key="5">
    <citation type="journal article" date="2010" name="J. Virol.">
        <title>Characterization of the varicella-zoster virus ORF50 gene, which encodes glycoprotein M.</title>
        <authorList>
            <person name="Sadaoka T."/>
            <person name="Yanagi T."/>
            <person name="Yamanishi K."/>
            <person name="Mori Y."/>
        </authorList>
    </citation>
    <scope>SUBCELLULAR LOCATION</scope>
    <scope>INTERACTION WITH GN</scope>
    <source>
        <strain>Isolate Human/Japan/P-Oka/1970</strain>
    </source>
</reference>
<evidence type="ECO:0000255" key="1">
    <source>
        <dbReference type="HAMAP-Rule" id="MF_04035"/>
    </source>
</evidence>
<evidence type="ECO:0000269" key="2">
    <source>
    </source>
</evidence>
<sequence length="435" mass="48672">MGTQKKGPRSEKVSPYDTTTPEVEALDHQMDTLNWRIWIIQVMMFTLGAVMLLATLIAASSEYTGIPCFYAAVVDYELFNATLDGGVWSGNRGGYSAPVLFLEPHSVVAFTYYTALTAMAMAVYTLITAAIIHRETKNQRVRQSSGVAWLVVDPTTLFWGLLSLWLLNAVVLLLAYKQIGVAATLYLGHFATSVIFTTYFCGRGKLDETNIKAVANLRQQSVFLYRLAGPTRAVFVNLMAALMAICILFVSLMLELVVANHLHTGLWSSVSVAMSTFSTLSVVYLIVSELILAHYIHVLIGPSLGTLVACATLGTAAHSYMDRLYDPISVQSPRLIPTTRGTLACLAVFSVVMLLLRLMRAYVYHRQKRSRFYGAVRRVPERVRGYIRKVKPAHRNSRRTNYPSQGYGYVYENDSTYETDREDELLYERSNSGWE</sequence>
<dbReference type="EMBL" id="AB097932">
    <property type="status" value="NOT_ANNOTATED_CDS"/>
    <property type="molecule type" value="Genomic_DNA"/>
</dbReference>
<dbReference type="EMBL" id="AB097933">
    <property type="status" value="NOT_ANNOTATED_CDS"/>
    <property type="molecule type" value="Genomic_DNA"/>
</dbReference>
<dbReference type="EMBL" id="AF206304">
    <property type="protein sequence ID" value="AAF61651.1"/>
    <property type="molecule type" value="Genomic_DNA"/>
</dbReference>
<dbReference type="EMBL" id="DQ008354">
    <property type="protein sequence ID" value="AAY57659.1"/>
    <property type="molecule type" value="Genomic_DNA"/>
</dbReference>
<dbReference type="EMBL" id="DQ008355">
    <property type="protein sequence ID" value="AAY57730.1"/>
    <property type="molecule type" value="Genomic_DNA"/>
</dbReference>
<dbReference type="RefSeq" id="NP_040172.1">
    <property type="nucleotide sequence ID" value="NC_001348.1"/>
</dbReference>
<dbReference type="SMR" id="Q77NP2"/>
<dbReference type="IntAct" id="Q77NP2">
    <property type="interactions" value="11"/>
</dbReference>
<dbReference type="MINT" id="Q77NP2"/>
<dbReference type="GeneID" id="1487658"/>
<dbReference type="KEGG" id="vg:1487658"/>
<dbReference type="Proteomes" id="UP000002603">
    <property type="component" value="Genome"/>
</dbReference>
<dbReference type="Proteomes" id="UP000008504">
    <property type="component" value="Genome"/>
</dbReference>
<dbReference type="Proteomes" id="UP000008505">
    <property type="component" value="Genome"/>
</dbReference>
<dbReference type="Proteomes" id="UP000008506">
    <property type="component" value="Genome"/>
</dbReference>
<dbReference type="GO" id="GO:0044175">
    <property type="term" value="C:host cell endosome membrane"/>
    <property type="evidence" value="ECO:0007669"/>
    <property type="project" value="UniProtKB-SubCell"/>
</dbReference>
<dbReference type="GO" id="GO:0044177">
    <property type="term" value="C:host cell Golgi apparatus"/>
    <property type="evidence" value="ECO:0007669"/>
    <property type="project" value="UniProtKB-SubCell"/>
</dbReference>
<dbReference type="GO" id="GO:0044201">
    <property type="term" value="C:host cell nuclear inner membrane"/>
    <property type="evidence" value="ECO:0007669"/>
    <property type="project" value="UniProtKB-SubCell"/>
</dbReference>
<dbReference type="GO" id="GO:0016020">
    <property type="term" value="C:membrane"/>
    <property type="evidence" value="ECO:0007669"/>
    <property type="project" value="UniProtKB-KW"/>
</dbReference>
<dbReference type="GO" id="GO:0019031">
    <property type="term" value="C:viral envelope"/>
    <property type="evidence" value="ECO:0007669"/>
    <property type="project" value="UniProtKB-KW"/>
</dbReference>
<dbReference type="GO" id="GO:0055036">
    <property type="term" value="C:virion membrane"/>
    <property type="evidence" value="ECO:0007669"/>
    <property type="project" value="UniProtKB-SubCell"/>
</dbReference>
<dbReference type="HAMAP" id="MF_04035">
    <property type="entry name" value="HSV_GM"/>
    <property type="match status" value="1"/>
</dbReference>
<dbReference type="InterPro" id="IPR000785">
    <property type="entry name" value="Herpes_glycop_M"/>
</dbReference>
<dbReference type="Pfam" id="PF01528">
    <property type="entry name" value="Herpes_glycop"/>
    <property type="match status" value="1"/>
</dbReference>
<dbReference type="PRINTS" id="PR00333">
    <property type="entry name" value="HSVINTEGRLMP"/>
</dbReference>